<sequence>MVFSTTAALSLLLALSSMQLSEVSEACTCMPNHPQEAFCNSDIVIRAKVVGKKLLKDGPFGTMRYTIKQMKMYRGFSKMQQVQYIYTEAAESLCGVRLQVNKFQYLITGRVFDGEVYTGVCNFIVPWDRLTLSQRKGLNHRYQYGCNCKIKPCYYLPCFVTAKNECFWTDMLSDQGYMGHQAKHYVCIRQKEGYCSWYRGAAPPDKTRINATDP</sequence>
<feature type="signal peptide" evidence="3">
    <location>
        <begin position="1"/>
        <end position="26"/>
    </location>
</feature>
<feature type="chain" id="PRO_0000034347" description="Metalloproteinase inhibitor 3">
    <location>
        <begin position="27"/>
        <end position="214"/>
    </location>
</feature>
<feature type="domain" description="NTR" evidence="4">
    <location>
        <begin position="27"/>
        <end position="146"/>
    </location>
</feature>
<feature type="region of interest" description="Involved in metalloproteinase-binding" evidence="2">
    <location>
        <begin position="27"/>
        <end position="30"/>
    </location>
</feature>
<feature type="region of interest" description="Involved in metalloproteinase-binding" evidence="2">
    <location>
        <begin position="91"/>
        <end position="92"/>
    </location>
</feature>
<feature type="binding site" evidence="2">
    <location>
        <position position="27"/>
    </location>
    <ligand>
        <name>Zn(2+)</name>
        <dbReference type="ChEBI" id="CHEBI:29105"/>
        <note>ligand shared with metalloproteinase partner</note>
    </ligand>
</feature>
<feature type="site" description="Involved in metalloproteinase-binding" evidence="2">
    <location>
        <position position="40"/>
    </location>
</feature>
<feature type="glycosylation site" description="N-linked (GlcNAc...) asparagine" evidence="3">
    <location>
        <position position="210"/>
    </location>
</feature>
<feature type="disulfide bond" evidence="4">
    <location>
        <begin position="27"/>
        <end position="94"/>
    </location>
</feature>
<feature type="disulfide bond" evidence="4">
    <location>
        <begin position="29"/>
        <end position="121"/>
    </location>
</feature>
<feature type="disulfide bond" evidence="4">
    <location>
        <begin position="39"/>
        <end position="146"/>
    </location>
</feature>
<feature type="disulfide bond" evidence="4">
    <location>
        <begin position="148"/>
        <end position="195"/>
    </location>
</feature>
<feature type="disulfide bond" evidence="4">
    <location>
        <begin position="153"/>
        <end position="158"/>
    </location>
</feature>
<feature type="disulfide bond" evidence="4">
    <location>
        <begin position="166"/>
        <end position="187"/>
    </location>
</feature>
<reference key="1">
    <citation type="journal article" date="2001" name="Biochim. Biophys. Acta">
        <title>Cloning and characterization of tissue inhibitor of metalloproteinase-3 (TIMP-3) from shark, Scyliorhinus torazame.</title>
        <authorList>
            <person name="Kim J.T."/>
            <person name="Kim M.-S."/>
            <person name="Bae M.-K."/>
            <person name="Song H.S."/>
            <person name="Ahn M.-Y."/>
            <person name="Kim Y.-J."/>
            <person name="Lee S.-J."/>
            <person name="Kim K.-W."/>
        </authorList>
    </citation>
    <scope>NUCLEOTIDE SEQUENCE [MRNA]</scope>
    <source>
        <tissue>Cartilage</tissue>
    </source>
</reference>
<gene>
    <name type="primary">TIMP3</name>
</gene>
<keyword id="KW-1015">Disulfide bond</keyword>
<keyword id="KW-0272">Extracellular matrix</keyword>
<keyword id="KW-0325">Glycoprotein</keyword>
<keyword id="KW-0479">Metal-binding</keyword>
<keyword id="KW-0481">Metalloenzyme inhibitor</keyword>
<keyword id="KW-0483">Metalloprotease inhibitor</keyword>
<keyword id="KW-0646">Protease inhibitor</keyword>
<keyword id="KW-0964">Secreted</keyword>
<keyword id="KW-0732">Signal</keyword>
<keyword id="KW-0862">Zinc</keyword>
<accession>Q9W6B4</accession>
<name>TIMP3_SCYTO</name>
<comment type="function">
    <text evidence="1">Complexes with metalloproteinases (such as collagenases) and irreversibly inactivates them by binding to their catalytic zinc cofactor. May form part of a tissue-specific acute response to remodeling stimuli (By similarity).</text>
</comment>
<comment type="subcellular location">
    <subcellularLocation>
        <location evidence="1">Secreted</location>
        <location evidence="1">Extracellular space</location>
        <location evidence="1">Extracellular matrix</location>
    </subcellularLocation>
</comment>
<comment type="tissue specificity">
    <text>Expressed abundantly in brain and cartilage.</text>
</comment>
<comment type="similarity">
    <text evidence="5">Belongs to the protease inhibitor I35 (TIMP) family.</text>
</comment>
<proteinExistence type="evidence at transcript level"/>
<organism>
    <name type="scientific">Scyliorhinus torazame</name>
    <name type="common">Cloudy catshark</name>
    <name type="synonym">Catulus torazame</name>
    <dbReference type="NCBI Taxonomy" id="75743"/>
    <lineage>
        <taxon>Eukaryota</taxon>
        <taxon>Metazoa</taxon>
        <taxon>Chordata</taxon>
        <taxon>Craniata</taxon>
        <taxon>Vertebrata</taxon>
        <taxon>Chondrichthyes</taxon>
        <taxon>Elasmobranchii</taxon>
        <taxon>Galeomorphii</taxon>
        <taxon>Galeoidea</taxon>
        <taxon>Carcharhiniformes</taxon>
        <taxon>Scyliorhinidae</taxon>
        <taxon>Scyliorhinus</taxon>
    </lineage>
</organism>
<dbReference type="EMBL" id="AF110767">
    <property type="protein sequence ID" value="AAD26150.1"/>
    <property type="molecule type" value="mRNA"/>
</dbReference>
<dbReference type="SMR" id="Q9W6B4"/>
<dbReference type="MEROPS" id="I35.003"/>
<dbReference type="GlyCosmos" id="Q9W6B4">
    <property type="glycosylation" value="1 site, No reported glycans"/>
</dbReference>
<dbReference type="GO" id="GO:0031012">
    <property type="term" value="C:extracellular matrix"/>
    <property type="evidence" value="ECO:0007669"/>
    <property type="project" value="TreeGrafter"/>
</dbReference>
<dbReference type="GO" id="GO:0005615">
    <property type="term" value="C:extracellular space"/>
    <property type="evidence" value="ECO:0007669"/>
    <property type="project" value="TreeGrafter"/>
</dbReference>
<dbReference type="GO" id="GO:0008191">
    <property type="term" value="F:metalloendopeptidase inhibitor activity"/>
    <property type="evidence" value="ECO:0007669"/>
    <property type="project" value="InterPro"/>
</dbReference>
<dbReference type="GO" id="GO:0002020">
    <property type="term" value="F:protease binding"/>
    <property type="evidence" value="ECO:0007669"/>
    <property type="project" value="TreeGrafter"/>
</dbReference>
<dbReference type="GO" id="GO:0008270">
    <property type="term" value="F:zinc ion binding"/>
    <property type="evidence" value="ECO:0000250"/>
    <property type="project" value="UniProtKB"/>
</dbReference>
<dbReference type="GO" id="GO:0051045">
    <property type="term" value="P:negative regulation of membrane protein ectodomain proteolysis"/>
    <property type="evidence" value="ECO:0007669"/>
    <property type="project" value="TreeGrafter"/>
</dbReference>
<dbReference type="GO" id="GO:0034097">
    <property type="term" value="P:response to cytokine"/>
    <property type="evidence" value="ECO:0007669"/>
    <property type="project" value="TreeGrafter"/>
</dbReference>
<dbReference type="GO" id="GO:0009725">
    <property type="term" value="P:response to hormone"/>
    <property type="evidence" value="ECO:0007669"/>
    <property type="project" value="TreeGrafter"/>
</dbReference>
<dbReference type="CDD" id="cd03585">
    <property type="entry name" value="NTR_TIMP"/>
    <property type="match status" value="1"/>
</dbReference>
<dbReference type="FunFam" id="3.90.370.10:FF:000001">
    <property type="entry name" value="Metalloproteinase inhibitor 3"/>
    <property type="match status" value="1"/>
</dbReference>
<dbReference type="Gene3D" id="2.40.50.120">
    <property type="match status" value="1"/>
</dbReference>
<dbReference type="Gene3D" id="3.90.370.10">
    <property type="entry name" value="Tissue inhibitor of metalloproteinase-1. Chain B, domain 1"/>
    <property type="match status" value="1"/>
</dbReference>
<dbReference type="InterPro" id="IPR001134">
    <property type="entry name" value="Netrin_domain"/>
</dbReference>
<dbReference type="InterPro" id="IPR001820">
    <property type="entry name" value="TIMP"/>
</dbReference>
<dbReference type="InterPro" id="IPR008993">
    <property type="entry name" value="TIMP-like_OB-fold"/>
</dbReference>
<dbReference type="InterPro" id="IPR027465">
    <property type="entry name" value="TIMP_C"/>
</dbReference>
<dbReference type="InterPro" id="IPR030490">
    <property type="entry name" value="TIMP_CS"/>
</dbReference>
<dbReference type="PANTHER" id="PTHR11844">
    <property type="entry name" value="METALLOPROTEASE INHIBITOR"/>
    <property type="match status" value="1"/>
</dbReference>
<dbReference type="PANTHER" id="PTHR11844:SF22">
    <property type="entry name" value="METALLOPROTEINASE INHIBITOR 3"/>
    <property type="match status" value="1"/>
</dbReference>
<dbReference type="Pfam" id="PF00965">
    <property type="entry name" value="TIMP"/>
    <property type="match status" value="1"/>
</dbReference>
<dbReference type="SMART" id="SM00206">
    <property type="entry name" value="NTR"/>
    <property type="match status" value="1"/>
</dbReference>
<dbReference type="SUPFAM" id="SSF50242">
    <property type="entry name" value="TIMP-like"/>
    <property type="match status" value="1"/>
</dbReference>
<dbReference type="PROSITE" id="PS50189">
    <property type="entry name" value="NTR"/>
    <property type="match status" value="1"/>
</dbReference>
<dbReference type="PROSITE" id="PS00288">
    <property type="entry name" value="TIMP"/>
    <property type="match status" value="1"/>
</dbReference>
<protein>
    <recommendedName>
        <fullName>Metalloproteinase inhibitor 3</fullName>
    </recommendedName>
    <alternativeName>
        <fullName>Tissue inhibitor of metalloproteinases 3</fullName>
        <shortName>TIMP-3</shortName>
    </alternativeName>
</protein>
<evidence type="ECO:0000250" key="1"/>
<evidence type="ECO:0000250" key="2">
    <source>
        <dbReference type="UniProtKB" id="P16035"/>
    </source>
</evidence>
<evidence type="ECO:0000255" key="3"/>
<evidence type="ECO:0000255" key="4">
    <source>
        <dbReference type="PROSITE-ProRule" id="PRU00295"/>
    </source>
</evidence>
<evidence type="ECO:0000305" key="5"/>